<sequence>MLIPWQDLSPETLENLIESFVLREGTDYGEHERTLEQKVSDVKRQLQCGEAVLVWSELHETVNIMPRSQFRE</sequence>
<name>YHEU_ECO45</name>
<evidence type="ECO:0000255" key="1">
    <source>
        <dbReference type="HAMAP-Rule" id="MF_00690"/>
    </source>
</evidence>
<gene>
    <name evidence="1" type="primary">yheU</name>
    <name type="ordered locus">ECS88_3744</name>
</gene>
<proteinExistence type="inferred from homology"/>
<protein>
    <recommendedName>
        <fullName evidence="1">UPF0270 protein YheU</fullName>
    </recommendedName>
</protein>
<comment type="similarity">
    <text evidence="1">Belongs to the UPF0270 family.</text>
</comment>
<dbReference type="EMBL" id="CU928161">
    <property type="protein sequence ID" value="CAR04959.1"/>
    <property type="molecule type" value="Genomic_DNA"/>
</dbReference>
<dbReference type="RefSeq" id="WP_000907086.1">
    <property type="nucleotide sequence ID" value="NC_011742.1"/>
</dbReference>
<dbReference type="SMR" id="B7MCX0"/>
<dbReference type="KEGG" id="ecz:ECS88_3744"/>
<dbReference type="HOGENOM" id="CLU_186759_1_0_6"/>
<dbReference type="Proteomes" id="UP000000747">
    <property type="component" value="Chromosome"/>
</dbReference>
<dbReference type="Gene3D" id="1.10.10.610">
    <property type="entry name" value="YehU-like"/>
    <property type="match status" value="1"/>
</dbReference>
<dbReference type="HAMAP" id="MF_00690">
    <property type="entry name" value="UPF0270"/>
    <property type="match status" value="1"/>
</dbReference>
<dbReference type="InterPro" id="IPR010648">
    <property type="entry name" value="UPF0270"/>
</dbReference>
<dbReference type="InterPro" id="IPR036685">
    <property type="entry name" value="YehU-like_sf"/>
</dbReference>
<dbReference type="NCBIfam" id="NF003438">
    <property type="entry name" value="PRK04966.1"/>
    <property type="match status" value="1"/>
</dbReference>
<dbReference type="Pfam" id="PF06794">
    <property type="entry name" value="UPF0270"/>
    <property type="match status" value="1"/>
</dbReference>
<dbReference type="PIRSF" id="PIRSF006169">
    <property type="entry name" value="UCP006169"/>
    <property type="match status" value="1"/>
</dbReference>
<dbReference type="SUPFAM" id="SSF118001">
    <property type="entry name" value="YehU-like"/>
    <property type="match status" value="1"/>
</dbReference>
<feature type="chain" id="PRO_1000132006" description="UPF0270 protein YheU">
    <location>
        <begin position="1"/>
        <end position="72"/>
    </location>
</feature>
<reference key="1">
    <citation type="journal article" date="2009" name="PLoS Genet.">
        <title>Organised genome dynamics in the Escherichia coli species results in highly diverse adaptive paths.</title>
        <authorList>
            <person name="Touchon M."/>
            <person name="Hoede C."/>
            <person name="Tenaillon O."/>
            <person name="Barbe V."/>
            <person name="Baeriswyl S."/>
            <person name="Bidet P."/>
            <person name="Bingen E."/>
            <person name="Bonacorsi S."/>
            <person name="Bouchier C."/>
            <person name="Bouvet O."/>
            <person name="Calteau A."/>
            <person name="Chiapello H."/>
            <person name="Clermont O."/>
            <person name="Cruveiller S."/>
            <person name="Danchin A."/>
            <person name="Diard M."/>
            <person name="Dossat C."/>
            <person name="Karoui M.E."/>
            <person name="Frapy E."/>
            <person name="Garry L."/>
            <person name="Ghigo J.M."/>
            <person name="Gilles A.M."/>
            <person name="Johnson J."/>
            <person name="Le Bouguenec C."/>
            <person name="Lescat M."/>
            <person name="Mangenot S."/>
            <person name="Martinez-Jehanne V."/>
            <person name="Matic I."/>
            <person name="Nassif X."/>
            <person name="Oztas S."/>
            <person name="Petit M.A."/>
            <person name="Pichon C."/>
            <person name="Rouy Z."/>
            <person name="Ruf C.S."/>
            <person name="Schneider D."/>
            <person name="Tourret J."/>
            <person name="Vacherie B."/>
            <person name="Vallenet D."/>
            <person name="Medigue C."/>
            <person name="Rocha E.P.C."/>
            <person name="Denamur E."/>
        </authorList>
    </citation>
    <scope>NUCLEOTIDE SEQUENCE [LARGE SCALE GENOMIC DNA]</scope>
    <source>
        <strain>S88 / ExPEC</strain>
    </source>
</reference>
<accession>B7MCX0</accession>
<keyword id="KW-1185">Reference proteome</keyword>
<organism>
    <name type="scientific">Escherichia coli O45:K1 (strain S88 / ExPEC)</name>
    <dbReference type="NCBI Taxonomy" id="585035"/>
    <lineage>
        <taxon>Bacteria</taxon>
        <taxon>Pseudomonadati</taxon>
        <taxon>Pseudomonadota</taxon>
        <taxon>Gammaproteobacteria</taxon>
        <taxon>Enterobacterales</taxon>
        <taxon>Enterobacteriaceae</taxon>
        <taxon>Escherichia</taxon>
    </lineage>
</organism>